<organism>
    <name type="scientific">Saccharomyces cerevisiae (strain ATCC 204508 / S288c)</name>
    <name type="common">Baker's yeast</name>
    <dbReference type="NCBI Taxonomy" id="559292"/>
    <lineage>
        <taxon>Eukaryota</taxon>
        <taxon>Fungi</taxon>
        <taxon>Dikarya</taxon>
        <taxon>Ascomycota</taxon>
        <taxon>Saccharomycotina</taxon>
        <taxon>Saccharomycetes</taxon>
        <taxon>Saccharomycetales</taxon>
        <taxon>Saccharomycetaceae</taxon>
        <taxon>Saccharomyces</taxon>
    </lineage>
</organism>
<evidence type="ECO:0000250" key="1"/>
<evidence type="ECO:0000255" key="2"/>
<evidence type="ECO:0000255" key="3">
    <source>
        <dbReference type="PROSITE-ProRule" id="PRU00132"/>
    </source>
</evidence>
<evidence type="ECO:0000256" key="4">
    <source>
        <dbReference type="SAM" id="MobiDB-lite"/>
    </source>
</evidence>
<evidence type="ECO:0000269" key="5">
    <source>
    </source>
</evidence>
<evidence type="ECO:0000269" key="6">
    <source>
    </source>
</evidence>
<evidence type="ECO:0000305" key="7"/>
<keyword id="KW-0472">Membrane</keyword>
<keyword id="KW-1185">Reference proteome</keyword>
<keyword id="KW-0812">Transmembrane</keyword>
<keyword id="KW-1133">Transmembrane helix</keyword>
<reference key="1">
    <citation type="journal article" date="1995" name="Yeast">
        <title>Sequence analysis of a 78.6 kb segment of the left end of Saccharomyces cerevisiae chromosome II.</title>
        <authorList>
            <person name="Obermaier B."/>
            <person name="Gassenhuber J."/>
            <person name="Piravandi E."/>
            <person name="Domdey H."/>
        </authorList>
    </citation>
    <scope>NUCLEOTIDE SEQUENCE [GENOMIC DNA]</scope>
</reference>
<reference key="2">
    <citation type="journal article" date="1994" name="EMBO J.">
        <title>Complete DNA sequence of yeast chromosome II.</title>
        <authorList>
            <person name="Feldmann H."/>
            <person name="Aigle M."/>
            <person name="Aljinovic G."/>
            <person name="Andre B."/>
            <person name="Baclet M.C."/>
            <person name="Barthe C."/>
            <person name="Baur A."/>
            <person name="Becam A.-M."/>
            <person name="Biteau N."/>
            <person name="Boles E."/>
            <person name="Brandt T."/>
            <person name="Brendel M."/>
            <person name="Brueckner M."/>
            <person name="Bussereau F."/>
            <person name="Christiansen C."/>
            <person name="Contreras R."/>
            <person name="Crouzet M."/>
            <person name="Cziepluch C."/>
            <person name="Demolis N."/>
            <person name="Delaveau T."/>
            <person name="Doignon F."/>
            <person name="Domdey H."/>
            <person name="Duesterhus S."/>
            <person name="Dubois E."/>
            <person name="Dujon B."/>
            <person name="El Bakkoury M."/>
            <person name="Entian K.-D."/>
            <person name="Feuermann M."/>
            <person name="Fiers W."/>
            <person name="Fobo G.M."/>
            <person name="Fritz C."/>
            <person name="Gassenhuber J."/>
            <person name="Glansdorff N."/>
            <person name="Goffeau A."/>
            <person name="Grivell L.A."/>
            <person name="de Haan M."/>
            <person name="Hein C."/>
            <person name="Herbert C.J."/>
            <person name="Hollenberg C.P."/>
            <person name="Holmstroem K."/>
            <person name="Jacq C."/>
            <person name="Jacquet M."/>
            <person name="Jauniaux J.-C."/>
            <person name="Jonniaux J.-L."/>
            <person name="Kallesoee T."/>
            <person name="Kiesau P."/>
            <person name="Kirchrath L."/>
            <person name="Koetter P."/>
            <person name="Korol S."/>
            <person name="Liebl S."/>
            <person name="Logghe M."/>
            <person name="Lohan A.J.E."/>
            <person name="Louis E.J."/>
            <person name="Li Z.Y."/>
            <person name="Maat M.J."/>
            <person name="Mallet L."/>
            <person name="Mannhaupt G."/>
            <person name="Messenguy F."/>
            <person name="Miosga T."/>
            <person name="Molemans F."/>
            <person name="Mueller S."/>
            <person name="Nasr F."/>
            <person name="Obermaier B."/>
            <person name="Perea J."/>
            <person name="Pierard A."/>
            <person name="Piravandi E."/>
            <person name="Pohl F.M."/>
            <person name="Pohl T.M."/>
            <person name="Potier S."/>
            <person name="Proft M."/>
            <person name="Purnelle B."/>
            <person name="Ramezani Rad M."/>
            <person name="Rieger M."/>
            <person name="Rose M."/>
            <person name="Schaaff-Gerstenschlaeger I."/>
            <person name="Scherens B."/>
            <person name="Schwarzlose C."/>
            <person name="Skala J."/>
            <person name="Slonimski P.P."/>
            <person name="Smits P.H.M."/>
            <person name="Souciet J.-L."/>
            <person name="Steensma H.Y."/>
            <person name="Stucka R."/>
            <person name="Urrestarazu L.A."/>
            <person name="van der Aart Q.J.M."/>
            <person name="Van Dyck L."/>
            <person name="Vassarotti A."/>
            <person name="Vetter I."/>
            <person name="Vierendeels F."/>
            <person name="Vissers S."/>
            <person name="Wagner G."/>
            <person name="de Wergifosse P."/>
            <person name="Wolfe K.H."/>
            <person name="Zagulski M."/>
            <person name="Zimmermann F.K."/>
            <person name="Mewes H.-W."/>
            <person name="Kleine K."/>
        </authorList>
    </citation>
    <scope>NUCLEOTIDE SEQUENCE [LARGE SCALE GENOMIC DNA]</scope>
    <source>
        <strain>ATCC 204508 / S288c</strain>
    </source>
</reference>
<reference key="3">
    <citation type="journal article" date="2014" name="G3 (Bethesda)">
        <title>The reference genome sequence of Saccharomyces cerevisiae: Then and now.</title>
        <authorList>
            <person name="Engel S.R."/>
            <person name="Dietrich F.S."/>
            <person name="Fisk D.G."/>
            <person name="Binkley G."/>
            <person name="Balakrishnan R."/>
            <person name="Costanzo M.C."/>
            <person name="Dwight S.S."/>
            <person name="Hitz B.C."/>
            <person name="Karra K."/>
            <person name="Nash R.S."/>
            <person name="Weng S."/>
            <person name="Wong E.D."/>
            <person name="Lloyd P."/>
            <person name="Skrzypek M.S."/>
            <person name="Miyasato S.R."/>
            <person name="Simison M."/>
            <person name="Cherry J.M."/>
        </authorList>
    </citation>
    <scope>GENOME REANNOTATION</scope>
    <source>
        <strain>ATCC 204508 / S288c</strain>
    </source>
</reference>
<reference key="4">
    <citation type="journal article" date="2007" name="Genome Res.">
        <title>Approaching a complete repository of sequence-verified protein-encoding clones for Saccharomyces cerevisiae.</title>
        <authorList>
            <person name="Hu Y."/>
            <person name="Rolfs A."/>
            <person name="Bhullar B."/>
            <person name="Murthy T.V.S."/>
            <person name="Zhu C."/>
            <person name="Berger M.F."/>
            <person name="Camargo A.A."/>
            <person name="Kelley F."/>
            <person name="McCarron S."/>
            <person name="Jepson D."/>
            <person name="Richardson A."/>
            <person name="Raphael J."/>
            <person name="Moreira D."/>
            <person name="Taycher E."/>
            <person name="Zuo D."/>
            <person name="Mohr S."/>
            <person name="Kane M.F."/>
            <person name="Williamson J."/>
            <person name="Simpson A.J.G."/>
            <person name="Bulyk M.L."/>
            <person name="Harlow E."/>
            <person name="Marsischky G."/>
            <person name="Kolodner R.D."/>
            <person name="LaBaer J."/>
        </authorList>
    </citation>
    <scope>NUCLEOTIDE SEQUENCE [GENOMIC DNA] OF 77-175</scope>
    <source>
        <strain>ATCC 204508 / S288c</strain>
    </source>
</reference>
<reference key="5">
    <citation type="journal article" date="2003" name="Genome Biol.">
        <title>Reinvestigation of the Saccharomyces cerevisiae genome annotation by comparison to the genome of a related fungus: Ashbya gossypii.</title>
        <authorList>
            <person name="Brachat S."/>
            <person name="Dietrich F.S."/>
            <person name="Voegeli S."/>
            <person name="Zhang Z."/>
            <person name="Stuart L."/>
            <person name="Lerch A."/>
            <person name="Gates K."/>
            <person name="Gaffney T.D."/>
            <person name="Philippsen P."/>
        </authorList>
    </citation>
    <scope>REVISION OF GENE MODEL</scope>
</reference>
<reference key="6">
    <citation type="journal article" date="2003" name="Nature">
        <title>Global analysis of protein expression in yeast.</title>
        <authorList>
            <person name="Ghaemmaghami S."/>
            <person name="Huh W.-K."/>
            <person name="Bower K."/>
            <person name="Howson R.W."/>
            <person name="Belle A."/>
            <person name="Dephoure N."/>
            <person name="O'Shea E.K."/>
            <person name="Weissman J.S."/>
        </authorList>
    </citation>
    <scope>LEVEL OF PROTEIN EXPRESSION [LARGE SCALE ANALYSIS]</scope>
</reference>
<reference key="7">
    <citation type="journal article" date="2005" name="J. Biol. Chem.">
        <title>A highly conserved binding site in vesicle-associated membrane protein-associated protein (VAP) for the FFAT motif of lipid-binding proteins.</title>
        <authorList>
            <person name="Loewen C.J.R."/>
            <person name="Levine T.P."/>
        </authorList>
    </citation>
    <scope>FUNCTION</scope>
</reference>
<comment type="function">
    <text evidence="1 6">Targets proteins containing a FFAT motif to membranes (By similarity). Involved in regulation of phospholipid metabolism.</text>
</comment>
<comment type="subcellular location">
    <subcellularLocation>
        <location evidence="7">Membrane</location>
        <topology evidence="7">Single-pass type IV membrane protein</topology>
    </subcellularLocation>
</comment>
<comment type="domain">
    <text evidence="1">The MSP domain is required for binding to the FFAT motif of target proteins.</text>
</comment>
<comment type="miscellaneous">
    <text evidence="5">Present with 358 molecules/cell in log phase SD medium.</text>
</comment>
<comment type="similarity">
    <text evidence="7">Belongs to the VAMP-associated protein (VAP) (TC 9.B.17) family.</text>
</comment>
<feature type="chain" id="PRO_0000213468" description="Vesicle-associated membrane protein-associated protein SCS22">
    <location>
        <begin position="1"/>
        <end position="175"/>
    </location>
</feature>
<feature type="topological domain" description="Cytoplasmic" evidence="2">
    <location>
        <begin position="1"/>
        <end position="154"/>
    </location>
</feature>
<feature type="transmembrane region" description="Helical; Anchor for type IV membrane protein" evidence="2">
    <location>
        <begin position="155"/>
        <end position="175"/>
    </location>
</feature>
<feature type="domain" description="MSP" evidence="3">
    <location>
        <begin position="1"/>
        <end position="125"/>
    </location>
</feature>
<feature type="region of interest" description="Disordered" evidence="4">
    <location>
        <begin position="133"/>
        <end position="152"/>
    </location>
</feature>
<feature type="sequence conflict" description="In Ref. 4; AAS56619." evidence="7" ref="4">
    <original>L</original>
    <variation>P</variation>
    <location>
        <position position="169"/>
    </location>
</feature>
<accession>Q6Q595</accession>
<accession>D6VPR2</accession>
<dbReference type="EMBL" id="X79489">
    <property type="status" value="NOT_ANNOTATED_CDS"/>
    <property type="molecule type" value="Genomic_DNA"/>
</dbReference>
<dbReference type="EMBL" id="Z35852">
    <property type="status" value="NOT_ANNOTATED_CDS"/>
    <property type="molecule type" value="Genomic_DNA"/>
</dbReference>
<dbReference type="EMBL" id="Z35853">
    <property type="status" value="NOT_ANNOTATED_CDS"/>
    <property type="molecule type" value="Genomic_DNA"/>
</dbReference>
<dbReference type="EMBL" id="AY558293">
    <property type="protein sequence ID" value="AAS56619.1"/>
    <property type="molecule type" value="Genomic_DNA"/>
</dbReference>
<dbReference type="EMBL" id="BK006936">
    <property type="protein sequence ID" value="DAA07032.1"/>
    <property type="molecule type" value="Genomic_DNA"/>
</dbReference>
<dbReference type="RefSeq" id="NP_009461.2">
    <property type="nucleotide sequence ID" value="NM_001184321.1"/>
</dbReference>
<dbReference type="SMR" id="Q6Q595"/>
<dbReference type="BioGRID" id="32612">
    <property type="interactions" value="120"/>
</dbReference>
<dbReference type="FunCoup" id="Q6Q595">
    <property type="interactions" value="344"/>
</dbReference>
<dbReference type="IntAct" id="Q6Q595">
    <property type="interactions" value="6"/>
</dbReference>
<dbReference type="STRING" id="4932.YBL091C-A"/>
<dbReference type="iPTMnet" id="Q6Q595"/>
<dbReference type="PaxDb" id="4932-YBL091C-A"/>
<dbReference type="PeptideAtlas" id="Q6Q595"/>
<dbReference type="EnsemblFungi" id="YBL091C-A_mRNA">
    <property type="protein sequence ID" value="YBL091C-A"/>
    <property type="gene ID" value="YBL091C-A"/>
</dbReference>
<dbReference type="GeneID" id="852186"/>
<dbReference type="KEGG" id="sce:YBL091C-A"/>
<dbReference type="AGR" id="SGD:S000007228"/>
<dbReference type="SGD" id="S000007228">
    <property type="gene designation" value="SCS22"/>
</dbReference>
<dbReference type="VEuPathDB" id="FungiDB:YBL091C-A"/>
<dbReference type="GeneTree" id="ENSGT00940000172509"/>
<dbReference type="HOGENOM" id="CLU_032848_4_0_1"/>
<dbReference type="InParanoid" id="Q6Q595"/>
<dbReference type="OMA" id="TAPKIYC"/>
<dbReference type="OrthoDB" id="264603at2759"/>
<dbReference type="BioCyc" id="YEAST:G3O-29247-MONOMER"/>
<dbReference type="Reactome" id="R-SCE-9013106">
    <property type="pathway name" value="RHOC GTPase cycle"/>
</dbReference>
<dbReference type="BioGRID-ORCS" id="852186">
    <property type="hits" value="3 hits in 10 CRISPR screens"/>
</dbReference>
<dbReference type="PRO" id="PR:Q6Q595"/>
<dbReference type="Proteomes" id="UP000002311">
    <property type="component" value="Chromosome II"/>
</dbReference>
<dbReference type="RNAct" id="Q6Q595">
    <property type="molecule type" value="protein"/>
</dbReference>
<dbReference type="GO" id="GO:0005829">
    <property type="term" value="C:cytosol"/>
    <property type="evidence" value="ECO:0007005"/>
    <property type="project" value="SGD"/>
</dbReference>
<dbReference type="GO" id="GO:0005789">
    <property type="term" value="C:endoplasmic reticulum membrane"/>
    <property type="evidence" value="ECO:0000318"/>
    <property type="project" value="GO_Central"/>
</dbReference>
<dbReference type="GO" id="GO:0005886">
    <property type="term" value="C:plasma membrane"/>
    <property type="evidence" value="ECO:0000318"/>
    <property type="project" value="GO_Central"/>
</dbReference>
<dbReference type="GO" id="GO:0043495">
    <property type="term" value="F:protein-membrane adaptor activity"/>
    <property type="evidence" value="ECO:0000318"/>
    <property type="project" value="GO_Central"/>
</dbReference>
<dbReference type="GO" id="GO:0090158">
    <property type="term" value="P:endoplasmic reticulum membrane organization"/>
    <property type="evidence" value="ECO:0000316"/>
    <property type="project" value="SGD"/>
</dbReference>
<dbReference type="GO" id="GO:0061817">
    <property type="term" value="P:endoplasmic reticulum-plasma membrane tethering"/>
    <property type="evidence" value="ECO:0000318"/>
    <property type="project" value="GO_Central"/>
</dbReference>
<dbReference type="GO" id="GO:0008654">
    <property type="term" value="P:phospholipid biosynthetic process"/>
    <property type="evidence" value="ECO:0000316"/>
    <property type="project" value="SGD"/>
</dbReference>
<dbReference type="GO" id="GO:0060304">
    <property type="term" value="P:regulation of phosphatidylinositol dephosphorylation"/>
    <property type="evidence" value="ECO:0000316"/>
    <property type="project" value="SGD"/>
</dbReference>
<dbReference type="GO" id="GO:0061709">
    <property type="term" value="P:reticulophagy"/>
    <property type="evidence" value="ECO:0000316"/>
    <property type="project" value="SGD"/>
</dbReference>
<dbReference type="FunFam" id="2.60.40.10:FF:002755">
    <property type="entry name" value="Suppressor of choline sensitivity"/>
    <property type="match status" value="1"/>
</dbReference>
<dbReference type="Gene3D" id="2.60.40.10">
    <property type="entry name" value="Immunoglobulins"/>
    <property type="match status" value="1"/>
</dbReference>
<dbReference type="InterPro" id="IPR013783">
    <property type="entry name" value="Ig-like_fold"/>
</dbReference>
<dbReference type="InterPro" id="IPR000535">
    <property type="entry name" value="MSP_dom"/>
</dbReference>
<dbReference type="InterPro" id="IPR008962">
    <property type="entry name" value="PapD-like_sf"/>
</dbReference>
<dbReference type="InterPro" id="IPR016763">
    <property type="entry name" value="VAP"/>
</dbReference>
<dbReference type="PANTHER" id="PTHR10809:SF6">
    <property type="entry name" value="AT11025P-RELATED"/>
    <property type="match status" value="1"/>
</dbReference>
<dbReference type="PANTHER" id="PTHR10809">
    <property type="entry name" value="VESICLE-ASSOCIATED MEMBRANE PROTEIN-ASSOCIATED PROTEIN"/>
    <property type="match status" value="1"/>
</dbReference>
<dbReference type="Pfam" id="PF00635">
    <property type="entry name" value="Motile_Sperm"/>
    <property type="match status" value="1"/>
</dbReference>
<dbReference type="SUPFAM" id="SSF49354">
    <property type="entry name" value="PapD-like"/>
    <property type="match status" value="1"/>
</dbReference>
<dbReference type="PROSITE" id="PS50202">
    <property type="entry name" value="MSP"/>
    <property type="match status" value="1"/>
</dbReference>
<gene>
    <name type="primary">SCS22</name>
    <name type="ordered locus">YBL091C-A</name>
</gene>
<protein>
    <recommendedName>
        <fullName>Vesicle-associated membrane protein-associated protein SCS22</fullName>
        <shortName>VAMP-associated protein SCS22</shortName>
    </recommendedName>
    <alternativeName>
        <fullName>VAP homolog 2</fullName>
    </alternativeName>
</protein>
<sequence>MRIVPEKLVFKAPLNKQSTEYIKLENDGEKRVIFKVRTSAPTKYCVRPNVAIIGAHESVNVQIVFLGLPKSTADDEMDQKRDKFLIVTLPIPAAYQNVEDGELLSDWPNLEEQYKDDIVFKKIKIFHSVLPKRKPSGNHDAESARAPSAGNGQSLSSRALLIITVIALLVGWIYY</sequence>
<name>SCS22_YEAST</name>
<proteinExistence type="evidence at protein level"/>